<proteinExistence type="inferred from homology"/>
<accession>O79977</accession>
<gene>
    <name evidence="1" type="primary">matK</name>
</gene>
<comment type="function">
    <text evidence="1">Usually encoded in the trnK tRNA gene intron. Probably assists in splicing its own and other chloroplast group II introns.</text>
</comment>
<comment type="subcellular location">
    <subcellularLocation>
        <location>Plastid</location>
        <location>Chloroplast</location>
    </subcellularLocation>
</comment>
<comment type="similarity">
    <text evidence="1">Belongs to the intron maturase 2 family. MatK subfamily.</text>
</comment>
<dbReference type="EMBL" id="AF288123">
    <property type="protein sequence ID" value="AAL36017.1"/>
    <property type="molecule type" value="Genomic_DNA"/>
</dbReference>
<dbReference type="GO" id="GO:0009507">
    <property type="term" value="C:chloroplast"/>
    <property type="evidence" value="ECO:0007669"/>
    <property type="project" value="UniProtKB-SubCell"/>
</dbReference>
<dbReference type="GO" id="GO:0003723">
    <property type="term" value="F:RNA binding"/>
    <property type="evidence" value="ECO:0007669"/>
    <property type="project" value="UniProtKB-KW"/>
</dbReference>
<dbReference type="GO" id="GO:0006397">
    <property type="term" value="P:mRNA processing"/>
    <property type="evidence" value="ECO:0007669"/>
    <property type="project" value="UniProtKB-KW"/>
</dbReference>
<dbReference type="GO" id="GO:0008380">
    <property type="term" value="P:RNA splicing"/>
    <property type="evidence" value="ECO:0007669"/>
    <property type="project" value="UniProtKB-UniRule"/>
</dbReference>
<dbReference type="GO" id="GO:0008033">
    <property type="term" value="P:tRNA processing"/>
    <property type="evidence" value="ECO:0007669"/>
    <property type="project" value="UniProtKB-KW"/>
</dbReference>
<dbReference type="HAMAP" id="MF_01390">
    <property type="entry name" value="MatK"/>
    <property type="match status" value="1"/>
</dbReference>
<dbReference type="InterPro" id="IPR024937">
    <property type="entry name" value="Domain_X"/>
</dbReference>
<dbReference type="InterPro" id="IPR002866">
    <property type="entry name" value="Maturase_MatK"/>
</dbReference>
<dbReference type="InterPro" id="IPR024942">
    <property type="entry name" value="Maturase_MatK_N"/>
</dbReference>
<dbReference type="PANTHER" id="PTHR34811">
    <property type="entry name" value="MATURASE K"/>
    <property type="match status" value="1"/>
</dbReference>
<dbReference type="PANTHER" id="PTHR34811:SF1">
    <property type="entry name" value="MATURASE K"/>
    <property type="match status" value="1"/>
</dbReference>
<dbReference type="Pfam" id="PF01348">
    <property type="entry name" value="Intron_maturas2"/>
    <property type="match status" value="1"/>
</dbReference>
<dbReference type="Pfam" id="PF01824">
    <property type="entry name" value="MatK_N"/>
    <property type="match status" value="1"/>
</dbReference>
<sequence>MEEFQGYLELYRSQQHDFLYPLIFREYIYALAHDRGLNRSVLLDNVGYDKKSSLLIIKRLISRMYQQNHFLISVNDSNQNKFFGYNKNLYSQIISEGFAVIVEIPFSLRLVSSLKETETVKSYNLRSIHSIFPFFEDKFPHLNYASDVLIPYPIHLEILVQTLRYCVKDPSSLHLLRLFLHEYYNWNTLITPKKSIFAKSNQRLFLLLYNSYVCEYESILLFLRNQSNHLRLTSSGILFERIRFYEKIKYPVEEVFANDFPATLWFFKDPFIQYVRYQGKSILASKDTPLLMNKWKYYLVHFWQCHFYVWSQPGRIHINQLSKHSFDFLGYLSSIRPNISVVRSQLLENSFLMDNAMKKLDTLFPIIPMIGSLAKVKFCNTSGHPISKSSWADSSDSDIIDRFVRIGGNLSHYYSGSSKKKSLYRIKYILRLSCVKTLARKHKSTVRTFLKRLGPKLLDEFFTEEEQIFSLLFPRTSSTLKRFYRGRIWYLDILCINDLVNHE</sequence>
<name>MATK_ROSCL</name>
<reference key="1">
    <citation type="journal article" date="2002" name="Plant Syst. Evol.">
        <title>Phylogenetic relationships in Rosaceae inferred from chloroplast matK and trnL-trnF nucleotide sequence data.</title>
        <authorList>
            <person name="Potter D."/>
            <person name="Gao F."/>
            <person name="Bortiri P.E."/>
            <person name="Oh S.-H."/>
            <person name="Baggett S."/>
        </authorList>
    </citation>
    <scope>NUCLEOTIDE SEQUENCE [GENOMIC DNA]</scope>
</reference>
<protein>
    <recommendedName>
        <fullName evidence="1">Maturase K</fullName>
    </recommendedName>
    <alternativeName>
        <fullName evidence="1">Intron maturase</fullName>
    </alternativeName>
</protein>
<evidence type="ECO:0000255" key="1">
    <source>
        <dbReference type="HAMAP-Rule" id="MF_01390"/>
    </source>
</evidence>
<keyword id="KW-0150">Chloroplast</keyword>
<keyword id="KW-0507">mRNA processing</keyword>
<keyword id="KW-0934">Plastid</keyword>
<keyword id="KW-0694">RNA-binding</keyword>
<keyword id="KW-0819">tRNA processing</keyword>
<geneLocation type="chloroplast"/>
<feature type="chain" id="PRO_0000143685" description="Maturase K">
    <location>
        <begin position="1"/>
        <end position="503"/>
    </location>
</feature>
<organism>
    <name type="scientific">Rosa californica</name>
    <name type="common">California wild rose</name>
    <dbReference type="NCBI Taxonomy" id="74641"/>
    <lineage>
        <taxon>Eukaryota</taxon>
        <taxon>Viridiplantae</taxon>
        <taxon>Streptophyta</taxon>
        <taxon>Embryophyta</taxon>
        <taxon>Tracheophyta</taxon>
        <taxon>Spermatophyta</taxon>
        <taxon>Magnoliopsida</taxon>
        <taxon>eudicotyledons</taxon>
        <taxon>Gunneridae</taxon>
        <taxon>Pentapetalae</taxon>
        <taxon>rosids</taxon>
        <taxon>fabids</taxon>
        <taxon>Rosales</taxon>
        <taxon>Rosaceae</taxon>
        <taxon>Rosoideae</taxon>
        <taxon>Rosoideae incertae sedis</taxon>
        <taxon>Rosa</taxon>
    </lineage>
</organism>